<comment type="function">
    <text evidence="1">Component of the anaphase promoting complex/cyclosome (APC/C), a cell cycle-regulated E3 ubiquitin ligase that controls progression through mitosis and the G1 phase of the cell cycle. The APC/C complex catalyzes assembly of branched 'Lys-11'-/'Lys-48'-linked branched ubiquitin chains on target proteins. In the complex, plays a role in the release of the mitotic checkpoint complex (MCC) from the APC/C: not required for APC/C activity itself, but promotes the turnover of CDC20 and MCC on the APC/C, thereby participating in the responsiveness of the spindle assembly checkpoint. Also required for degradation of CDC20.</text>
</comment>
<comment type="pathway">
    <text evidence="1">Protein modification; protein ubiquitination.</text>
</comment>
<comment type="subunit">
    <text evidence="1">The mammalian APC/C is composed at least of 14 distinct subunits ANAPC1, ANAPC2, CDC27/APC3, ANAPC4, ANAPC5, CDC16/APC6, ANAPC7, CDC23/APC8, ANAPC10, ANAPC11, CDC26/APC12, ANAPC13, ANAPC15 and ANAPC16 that assemble into a complex of at least 19 chains with a combined molecular mass of around 1.2 MDa; APC/C interacts with FZR1 and FBXO5.</text>
</comment>
<comment type="similarity">
    <text evidence="3">Belongs to the APC15 family.</text>
</comment>
<proteinExistence type="evidence at transcript level"/>
<dbReference type="EMBL" id="BC103197">
    <property type="protein sequence ID" value="AAI03198.1"/>
    <property type="molecule type" value="mRNA"/>
</dbReference>
<dbReference type="RefSeq" id="NP_001029415.1">
    <property type="nucleotide sequence ID" value="NM_001034243.1"/>
</dbReference>
<dbReference type="RefSeq" id="XP_005216223.3">
    <property type="nucleotide sequence ID" value="XM_005216166.5"/>
</dbReference>
<dbReference type="RefSeq" id="XP_010822824.1">
    <property type="nucleotide sequence ID" value="XM_010824522.2"/>
</dbReference>
<dbReference type="SMR" id="Q3SZ31"/>
<dbReference type="FunCoup" id="Q3SZ31">
    <property type="interactions" value="1966"/>
</dbReference>
<dbReference type="STRING" id="9913.ENSBTAP00000003902"/>
<dbReference type="PaxDb" id="9913-ENSBTAP00000003902"/>
<dbReference type="GeneID" id="505356"/>
<dbReference type="KEGG" id="bta:101905242"/>
<dbReference type="KEGG" id="bta:505356"/>
<dbReference type="CTD" id="25906"/>
<dbReference type="VEuPathDB" id="HostDB:ENSBTAG00000002999"/>
<dbReference type="eggNOG" id="ENOG502RZUK">
    <property type="taxonomic scope" value="Eukaryota"/>
</dbReference>
<dbReference type="HOGENOM" id="CLU_142923_0_0_1"/>
<dbReference type="InParanoid" id="Q3SZ31"/>
<dbReference type="OMA" id="EGTDQDQ"/>
<dbReference type="OrthoDB" id="6362917at2759"/>
<dbReference type="Reactome" id="R-BTA-141430">
    <property type="pathway name" value="Inactivation of APC/C via direct inhibition of the APC/C complex"/>
</dbReference>
<dbReference type="Reactome" id="R-BTA-174048">
    <property type="pathway name" value="APC/C:Cdc20 mediated degradation of Cyclin B"/>
</dbReference>
<dbReference type="Reactome" id="R-BTA-174084">
    <property type="pathway name" value="Autodegradation of Cdh1 by Cdh1:APC/C"/>
</dbReference>
<dbReference type="Reactome" id="R-BTA-174154">
    <property type="pathway name" value="APC/C:Cdc20 mediated degradation of Securin"/>
</dbReference>
<dbReference type="Reactome" id="R-BTA-174178">
    <property type="pathway name" value="APC/C:Cdh1 mediated degradation of Cdc20 and other APC/C:Cdh1 targeted proteins in late mitosis/early G1"/>
</dbReference>
<dbReference type="Reactome" id="R-BTA-174184">
    <property type="pathway name" value="Cdc20:Phospho-APC/C mediated degradation of Cyclin A"/>
</dbReference>
<dbReference type="Reactome" id="R-BTA-176407">
    <property type="pathway name" value="Conversion from APC/C:Cdc20 to APC/C:Cdh1 in late anaphase"/>
</dbReference>
<dbReference type="Reactome" id="R-BTA-176408">
    <property type="pathway name" value="Regulation of APC/C activators between G1/S and early anaphase"/>
</dbReference>
<dbReference type="Reactome" id="R-BTA-176409">
    <property type="pathway name" value="APC/C:Cdc20 mediated degradation of mitotic proteins"/>
</dbReference>
<dbReference type="Reactome" id="R-BTA-176412">
    <property type="pathway name" value="Phosphorylation of the APC/C"/>
</dbReference>
<dbReference type="Reactome" id="R-BTA-179409">
    <property type="pathway name" value="APC-Cdc20 mediated degradation of Nek2A"/>
</dbReference>
<dbReference type="Reactome" id="R-BTA-2467813">
    <property type="pathway name" value="Separation of Sister Chromatids"/>
</dbReference>
<dbReference type="Reactome" id="R-BTA-2559582">
    <property type="pathway name" value="Senescence-Associated Secretory Phenotype (SASP)"/>
</dbReference>
<dbReference type="Reactome" id="R-BTA-68867">
    <property type="pathway name" value="Assembly of the pre-replicative complex"/>
</dbReference>
<dbReference type="Reactome" id="R-BTA-69017">
    <property type="pathway name" value="CDK-mediated phosphorylation and removal of Cdc6"/>
</dbReference>
<dbReference type="UniPathway" id="UPA00143"/>
<dbReference type="Proteomes" id="UP000009136">
    <property type="component" value="Chromosome 15"/>
</dbReference>
<dbReference type="Bgee" id="ENSBTAG00000002999">
    <property type="expression patterns" value="Expressed in biceps femoris and 105 other cell types or tissues"/>
</dbReference>
<dbReference type="GO" id="GO:0005680">
    <property type="term" value="C:anaphase-promoting complex"/>
    <property type="evidence" value="ECO:0000250"/>
    <property type="project" value="UniProtKB"/>
</dbReference>
<dbReference type="GO" id="GO:0031145">
    <property type="term" value="P:anaphase-promoting complex-dependent catabolic process"/>
    <property type="evidence" value="ECO:0000250"/>
    <property type="project" value="UniProtKB"/>
</dbReference>
<dbReference type="GO" id="GO:0051301">
    <property type="term" value="P:cell division"/>
    <property type="evidence" value="ECO:0007669"/>
    <property type="project" value="UniProtKB-KW"/>
</dbReference>
<dbReference type="GO" id="GO:0141198">
    <property type="term" value="P:protein branched polyubiquitination"/>
    <property type="evidence" value="ECO:0000250"/>
    <property type="project" value="UniProtKB"/>
</dbReference>
<dbReference type="GO" id="GO:0070979">
    <property type="term" value="P:protein K11-linked ubiquitination"/>
    <property type="evidence" value="ECO:0000250"/>
    <property type="project" value="UniProtKB"/>
</dbReference>
<dbReference type="GO" id="GO:0070936">
    <property type="term" value="P:protein K48-linked ubiquitination"/>
    <property type="evidence" value="ECO:0000250"/>
    <property type="project" value="UniProtKB"/>
</dbReference>
<dbReference type="GO" id="GO:0090266">
    <property type="term" value="P:regulation of mitotic cell cycle spindle assembly checkpoint"/>
    <property type="evidence" value="ECO:0000250"/>
    <property type="project" value="UniProtKB"/>
</dbReference>
<dbReference type="InterPro" id="IPR026182">
    <property type="entry name" value="ANAPC15"/>
</dbReference>
<dbReference type="PANTHER" id="PTHR22526">
    <property type="entry name" value="ANAPHASE PROMOTING COMPLEX C SUBUNIT 15, PSEUDOGENE-RELATED"/>
    <property type="match status" value="1"/>
</dbReference>
<dbReference type="PANTHER" id="PTHR22526:SF2">
    <property type="entry name" value="ANAPHASE PROMOTING COMPLEX C SUBUNIT 15, PSEUDOGENE-RELATED"/>
    <property type="match status" value="1"/>
</dbReference>
<dbReference type="Pfam" id="PF15243">
    <property type="entry name" value="ANAPC15"/>
    <property type="match status" value="1"/>
</dbReference>
<gene>
    <name type="primary">ANAPC15</name>
</gene>
<accession>Q3SZ31</accession>
<evidence type="ECO:0000250" key="1">
    <source>
        <dbReference type="UniProtKB" id="P60006"/>
    </source>
</evidence>
<evidence type="ECO:0000256" key="2">
    <source>
        <dbReference type="SAM" id="MobiDB-lite"/>
    </source>
</evidence>
<evidence type="ECO:0000305" key="3"/>
<protein>
    <recommendedName>
        <fullName>Anaphase-promoting complex subunit 15</fullName>
        <shortName>APC15</shortName>
    </recommendedName>
</protein>
<keyword id="KW-0131">Cell cycle</keyword>
<keyword id="KW-0132">Cell division</keyword>
<keyword id="KW-0498">Mitosis</keyword>
<keyword id="KW-1185">Reference proteome</keyword>
<sequence length="121" mass="14281">MSTLFPSLFPRVTETLWFNLDRPCVEETELQQQEQQHQAWLQSIAEKDNNLVPIGKPASEHYDDEEEEDEDDDEDSEEDSEDDEDMQDMDEMNDYNESPDDGEVNEVDMEGNEQDQDQWMI</sequence>
<name>APC15_BOVIN</name>
<organism>
    <name type="scientific">Bos taurus</name>
    <name type="common">Bovine</name>
    <dbReference type="NCBI Taxonomy" id="9913"/>
    <lineage>
        <taxon>Eukaryota</taxon>
        <taxon>Metazoa</taxon>
        <taxon>Chordata</taxon>
        <taxon>Craniata</taxon>
        <taxon>Vertebrata</taxon>
        <taxon>Euteleostomi</taxon>
        <taxon>Mammalia</taxon>
        <taxon>Eutheria</taxon>
        <taxon>Laurasiatheria</taxon>
        <taxon>Artiodactyla</taxon>
        <taxon>Ruminantia</taxon>
        <taxon>Pecora</taxon>
        <taxon>Bovidae</taxon>
        <taxon>Bovinae</taxon>
        <taxon>Bos</taxon>
    </lineage>
</organism>
<feature type="chain" id="PRO_0000084071" description="Anaphase-promoting complex subunit 15">
    <location>
        <begin position="1"/>
        <end position="121"/>
    </location>
</feature>
<feature type="region of interest" description="Disordered" evidence="2">
    <location>
        <begin position="46"/>
        <end position="121"/>
    </location>
</feature>
<feature type="compositionally biased region" description="Acidic residues" evidence="2">
    <location>
        <begin position="62"/>
        <end position="121"/>
    </location>
</feature>
<reference key="1">
    <citation type="submission" date="2005-08" db="EMBL/GenBank/DDBJ databases">
        <authorList>
            <consortium name="NIH - Mammalian Gene Collection (MGC) project"/>
        </authorList>
    </citation>
    <scope>NUCLEOTIDE SEQUENCE [LARGE SCALE MRNA]</scope>
    <source>
        <strain>Hereford</strain>
        <tissue>Rumen</tissue>
    </source>
</reference>